<accession>P57925</accession>
<organism>
    <name type="scientific">Pasteurella multocida (strain Pm70)</name>
    <dbReference type="NCBI Taxonomy" id="272843"/>
    <lineage>
        <taxon>Bacteria</taxon>
        <taxon>Pseudomonadati</taxon>
        <taxon>Pseudomonadota</taxon>
        <taxon>Gammaproteobacteria</taxon>
        <taxon>Pasteurellales</taxon>
        <taxon>Pasteurellaceae</taxon>
        <taxon>Pasteurella</taxon>
    </lineage>
</organism>
<protein>
    <recommendedName>
        <fullName evidence="1">Shikimate kinase</fullName>
        <shortName evidence="1">SK</shortName>
        <ecNumber evidence="1">2.7.1.71</ecNumber>
    </recommendedName>
</protein>
<proteinExistence type="inferred from homology"/>
<keyword id="KW-0028">Amino-acid biosynthesis</keyword>
<keyword id="KW-0057">Aromatic amino acid biosynthesis</keyword>
<keyword id="KW-0067">ATP-binding</keyword>
<keyword id="KW-0963">Cytoplasm</keyword>
<keyword id="KW-0418">Kinase</keyword>
<keyword id="KW-0460">Magnesium</keyword>
<keyword id="KW-0479">Metal-binding</keyword>
<keyword id="KW-0547">Nucleotide-binding</keyword>
<keyword id="KW-1185">Reference proteome</keyword>
<keyword id="KW-0808">Transferase</keyword>
<evidence type="ECO:0000255" key="1">
    <source>
        <dbReference type="HAMAP-Rule" id="MF_00109"/>
    </source>
</evidence>
<reference key="1">
    <citation type="journal article" date="2001" name="Proc. Natl. Acad. Sci. U.S.A.">
        <title>Complete genomic sequence of Pasteurella multocida Pm70.</title>
        <authorList>
            <person name="May B.J."/>
            <person name="Zhang Q."/>
            <person name="Li L.L."/>
            <person name="Paustian M.L."/>
            <person name="Whittam T.S."/>
            <person name="Kapur V."/>
        </authorList>
    </citation>
    <scope>NUCLEOTIDE SEQUENCE [LARGE SCALE GENOMIC DNA]</scope>
    <source>
        <strain>Pm70</strain>
    </source>
</reference>
<gene>
    <name evidence="1" type="primary">aroK</name>
    <name type="ordered locus">PM1224</name>
</gene>
<comment type="function">
    <text evidence="1">Catalyzes the specific phosphorylation of the 3-hydroxyl group of shikimic acid using ATP as a cosubstrate.</text>
</comment>
<comment type="catalytic activity">
    <reaction evidence="1">
        <text>shikimate + ATP = 3-phosphoshikimate + ADP + H(+)</text>
        <dbReference type="Rhea" id="RHEA:13121"/>
        <dbReference type="ChEBI" id="CHEBI:15378"/>
        <dbReference type="ChEBI" id="CHEBI:30616"/>
        <dbReference type="ChEBI" id="CHEBI:36208"/>
        <dbReference type="ChEBI" id="CHEBI:145989"/>
        <dbReference type="ChEBI" id="CHEBI:456216"/>
        <dbReference type="EC" id="2.7.1.71"/>
    </reaction>
</comment>
<comment type="cofactor">
    <cofactor evidence="1">
        <name>Mg(2+)</name>
        <dbReference type="ChEBI" id="CHEBI:18420"/>
    </cofactor>
    <text evidence="1">Binds 1 Mg(2+) ion per subunit.</text>
</comment>
<comment type="pathway">
    <text evidence="1">Metabolic intermediate biosynthesis; chorismate biosynthesis; chorismate from D-erythrose 4-phosphate and phosphoenolpyruvate: step 5/7.</text>
</comment>
<comment type="subunit">
    <text evidence="1">Monomer.</text>
</comment>
<comment type="subcellular location">
    <subcellularLocation>
        <location evidence="1">Cytoplasm</location>
    </subcellularLocation>
</comment>
<comment type="similarity">
    <text evidence="1">Belongs to the shikimate kinase family.</text>
</comment>
<dbReference type="EC" id="2.7.1.71" evidence="1"/>
<dbReference type="EMBL" id="AE004439">
    <property type="protein sequence ID" value="AAK03308.1"/>
    <property type="molecule type" value="Genomic_DNA"/>
</dbReference>
<dbReference type="RefSeq" id="WP_005717623.1">
    <property type="nucleotide sequence ID" value="NC_002663.1"/>
</dbReference>
<dbReference type="SMR" id="P57925"/>
<dbReference type="STRING" id="272843.PM1224"/>
<dbReference type="EnsemblBacteria" id="AAK03308">
    <property type="protein sequence ID" value="AAK03308"/>
    <property type="gene ID" value="PM1224"/>
</dbReference>
<dbReference type="GeneID" id="77206541"/>
<dbReference type="KEGG" id="pmu:PM1224"/>
<dbReference type="HOGENOM" id="CLU_057607_2_2_6"/>
<dbReference type="OrthoDB" id="9800332at2"/>
<dbReference type="UniPathway" id="UPA00053">
    <property type="reaction ID" value="UER00088"/>
</dbReference>
<dbReference type="Proteomes" id="UP000000809">
    <property type="component" value="Chromosome"/>
</dbReference>
<dbReference type="GO" id="GO:0005829">
    <property type="term" value="C:cytosol"/>
    <property type="evidence" value="ECO:0007669"/>
    <property type="project" value="TreeGrafter"/>
</dbReference>
<dbReference type="GO" id="GO:0005524">
    <property type="term" value="F:ATP binding"/>
    <property type="evidence" value="ECO:0007669"/>
    <property type="project" value="UniProtKB-UniRule"/>
</dbReference>
<dbReference type="GO" id="GO:0000287">
    <property type="term" value="F:magnesium ion binding"/>
    <property type="evidence" value="ECO:0007669"/>
    <property type="project" value="UniProtKB-UniRule"/>
</dbReference>
<dbReference type="GO" id="GO:0004765">
    <property type="term" value="F:shikimate kinase activity"/>
    <property type="evidence" value="ECO:0007669"/>
    <property type="project" value="UniProtKB-UniRule"/>
</dbReference>
<dbReference type="GO" id="GO:0008652">
    <property type="term" value="P:amino acid biosynthetic process"/>
    <property type="evidence" value="ECO:0007669"/>
    <property type="project" value="UniProtKB-KW"/>
</dbReference>
<dbReference type="GO" id="GO:0009073">
    <property type="term" value="P:aromatic amino acid family biosynthetic process"/>
    <property type="evidence" value="ECO:0007669"/>
    <property type="project" value="UniProtKB-KW"/>
</dbReference>
<dbReference type="GO" id="GO:0009423">
    <property type="term" value="P:chorismate biosynthetic process"/>
    <property type="evidence" value="ECO:0007669"/>
    <property type="project" value="UniProtKB-UniRule"/>
</dbReference>
<dbReference type="CDD" id="cd00464">
    <property type="entry name" value="SK"/>
    <property type="match status" value="1"/>
</dbReference>
<dbReference type="FunFam" id="3.40.50.300:FF:000099">
    <property type="entry name" value="Shikimate kinase 1"/>
    <property type="match status" value="1"/>
</dbReference>
<dbReference type="Gene3D" id="3.40.50.300">
    <property type="entry name" value="P-loop containing nucleotide triphosphate hydrolases"/>
    <property type="match status" value="1"/>
</dbReference>
<dbReference type="HAMAP" id="MF_00109">
    <property type="entry name" value="Shikimate_kinase"/>
    <property type="match status" value="1"/>
</dbReference>
<dbReference type="InterPro" id="IPR027417">
    <property type="entry name" value="P-loop_NTPase"/>
</dbReference>
<dbReference type="InterPro" id="IPR031322">
    <property type="entry name" value="Shikimate/glucono_kinase"/>
</dbReference>
<dbReference type="InterPro" id="IPR000623">
    <property type="entry name" value="Shikimate_kinase/TSH1"/>
</dbReference>
<dbReference type="InterPro" id="IPR023000">
    <property type="entry name" value="Shikimate_kinase_CS"/>
</dbReference>
<dbReference type="NCBIfam" id="NF003456">
    <property type="entry name" value="PRK05057.1"/>
    <property type="match status" value="1"/>
</dbReference>
<dbReference type="PANTHER" id="PTHR21087">
    <property type="entry name" value="SHIKIMATE KINASE"/>
    <property type="match status" value="1"/>
</dbReference>
<dbReference type="PANTHER" id="PTHR21087:SF16">
    <property type="entry name" value="SHIKIMATE KINASE 1, CHLOROPLASTIC"/>
    <property type="match status" value="1"/>
</dbReference>
<dbReference type="Pfam" id="PF01202">
    <property type="entry name" value="SKI"/>
    <property type="match status" value="1"/>
</dbReference>
<dbReference type="PRINTS" id="PR01100">
    <property type="entry name" value="SHIKIMTKNASE"/>
</dbReference>
<dbReference type="SUPFAM" id="SSF52540">
    <property type="entry name" value="P-loop containing nucleoside triphosphate hydrolases"/>
    <property type="match status" value="1"/>
</dbReference>
<dbReference type="PROSITE" id="PS01128">
    <property type="entry name" value="SHIKIMATE_KINASE"/>
    <property type="match status" value="1"/>
</dbReference>
<name>AROK_PASMU</name>
<sequence length="175" mass="19790">MAEKRNIFLIGPMGAGKSTIGRQLAQLLSMDFVDSDNEIEQRAGADISWIFDVEGEDGFRKREERIINELTQRQGIVLSTGGGAVLSKENRNHLSARGIVIYLETTVEKQYQRTQRDKKRPLLQEVEDPRQVLEDLAKIRNPLYEEIADITLPTDEQSAKVMATQIVDLIDNLHG</sequence>
<feature type="chain" id="PRO_0000192398" description="Shikimate kinase">
    <location>
        <begin position="1"/>
        <end position="175"/>
    </location>
</feature>
<feature type="binding site" evidence="1">
    <location>
        <begin position="14"/>
        <end position="19"/>
    </location>
    <ligand>
        <name>ATP</name>
        <dbReference type="ChEBI" id="CHEBI:30616"/>
    </ligand>
</feature>
<feature type="binding site" evidence="1">
    <location>
        <position position="18"/>
    </location>
    <ligand>
        <name>Mg(2+)</name>
        <dbReference type="ChEBI" id="CHEBI:18420"/>
    </ligand>
</feature>
<feature type="binding site" evidence="1">
    <location>
        <position position="36"/>
    </location>
    <ligand>
        <name>substrate</name>
    </ligand>
</feature>
<feature type="binding site" evidence="1">
    <location>
        <position position="60"/>
    </location>
    <ligand>
        <name>substrate</name>
    </ligand>
</feature>
<feature type="binding site" evidence="1">
    <location>
        <position position="82"/>
    </location>
    <ligand>
        <name>substrate</name>
    </ligand>
</feature>
<feature type="binding site" evidence="1">
    <location>
        <position position="120"/>
    </location>
    <ligand>
        <name>ATP</name>
        <dbReference type="ChEBI" id="CHEBI:30616"/>
    </ligand>
</feature>
<feature type="binding site" evidence="1">
    <location>
        <position position="140"/>
    </location>
    <ligand>
        <name>substrate</name>
    </ligand>
</feature>
<feature type="binding site" evidence="1">
    <location>
        <position position="157"/>
    </location>
    <ligand>
        <name>ATP</name>
        <dbReference type="ChEBI" id="CHEBI:30616"/>
    </ligand>
</feature>